<organism>
    <name type="scientific">Klebsiella pneumoniae</name>
    <dbReference type="NCBI Taxonomy" id="573"/>
    <lineage>
        <taxon>Bacteria</taxon>
        <taxon>Pseudomonadati</taxon>
        <taxon>Pseudomonadota</taxon>
        <taxon>Gammaproteobacteria</taxon>
        <taxon>Enterobacterales</taxon>
        <taxon>Enterobacteriaceae</taxon>
        <taxon>Klebsiella/Raoultella group</taxon>
        <taxon>Klebsiella</taxon>
        <taxon>Klebsiella pneumoniae complex</taxon>
    </lineage>
</organism>
<gene>
    <name evidence="2" type="primary">kpnIM</name>
</gene>
<protein>
    <recommendedName>
        <fullName evidence="1">Type II methyltransferase M.KpnI</fullName>
        <shortName evidence="2">M.KpnI</shortName>
        <ecNumber>2.1.1.72</ecNumber>
    </recommendedName>
    <alternativeName>
        <fullName>Adenine-specific methyltransferase KpnI</fullName>
    </alternativeName>
    <alternativeName>
        <fullName>Modification methylase KpnI</fullName>
    </alternativeName>
</protein>
<sequence>MDNHANEINKLSRELGLLSNYEFNMDELKNLSPLDSTSSSIYIGDNLTYLQGLSKTSPKTIDFCYIDPPYNTGNKIIYHDNRKSVSSDIFGLHNEWMSFLLPRLFHAHKMLKDTGIIAISIDDYEFAHLKILMDKIFGEDNFIGNIVVCRSKNGKGSKRNIASAHEYLLVYGKSDMAELSGQPDDKSLYDKVDCFGEYRIDGMFRKKGDSSLRTDRPNMFYPLYFNPSTGEVQVEPELGLKTVYPIDSKGIERRWLWSKETARERSWELFASKNGVVYVKNYSSSHKRIKVRTLWNDSSFYTERATNEITKIFGSKVFDTPKALNYIMSIINCMAKPDALILDFFAGSGTTAHAAAVLNSLDGGSRKTILMESNHPITKTHIAYKSGFRKISDITISRLNYVSDNFPDFKYKKIEII</sequence>
<proteinExistence type="inferred from homology"/>
<name>MTK1_KLEPN</name>
<dbReference type="EC" id="2.1.1.72"/>
<dbReference type="EMBL" id="M76435">
    <property type="protein sequence ID" value="AAA25090.1"/>
    <property type="molecule type" value="Genomic_DNA"/>
</dbReference>
<dbReference type="EMBL" id="X61796">
    <property type="protein sequence ID" value="CAA43898.1"/>
    <property type="molecule type" value="Genomic_DNA"/>
</dbReference>
<dbReference type="PIR" id="S34433">
    <property type="entry name" value="S34433"/>
</dbReference>
<dbReference type="RefSeq" id="WP_004176757.1">
    <property type="nucleotide sequence ID" value="NZ_VIDJ01000017.1"/>
</dbReference>
<dbReference type="SMR" id="P25238"/>
<dbReference type="REBASE" id="231989">
    <property type="entry name" value="M.Sen4024ORF3837P"/>
</dbReference>
<dbReference type="REBASE" id="3436">
    <property type="entry name" value="M.KpnI"/>
</dbReference>
<dbReference type="PRO" id="PR:P25238"/>
<dbReference type="GO" id="GO:0003677">
    <property type="term" value="F:DNA binding"/>
    <property type="evidence" value="ECO:0007669"/>
    <property type="project" value="InterPro"/>
</dbReference>
<dbReference type="GO" id="GO:0008170">
    <property type="term" value="F:N-methyltransferase activity"/>
    <property type="evidence" value="ECO:0007669"/>
    <property type="project" value="InterPro"/>
</dbReference>
<dbReference type="GO" id="GO:0009007">
    <property type="term" value="F:site-specific DNA-methyltransferase (adenine-specific) activity"/>
    <property type="evidence" value="ECO:0007669"/>
    <property type="project" value="UniProtKB-EC"/>
</dbReference>
<dbReference type="GO" id="GO:0009307">
    <property type="term" value="P:DNA restriction-modification system"/>
    <property type="evidence" value="ECO:0007669"/>
    <property type="project" value="UniProtKB-KW"/>
</dbReference>
<dbReference type="GO" id="GO:0032259">
    <property type="term" value="P:methylation"/>
    <property type="evidence" value="ECO:0007669"/>
    <property type="project" value="UniProtKB-KW"/>
</dbReference>
<dbReference type="Gene3D" id="3.40.50.150">
    <property type="entry name" value="Vaccinia Virus protein VP39"/>
    <property type="match status" value="1"/>
</dbReference>
<dbReference type="InterPro" id="IPR002941">
    <property type="entry name" value="DNA_methylase_N4/N6"/>
</dbReference>
<dbReference type="InterPro" id="IPR002052">
    <property type="entry name" value="DNA_methylase_N6_adenine_CS"/>
</dbReference>
<dbReference type="InterPro" id="IPR002295">
    <property type="entry name" value="N4/N6-MTase_EcoPI_Mod-like"/>
</dbReference>
<dbReference type="InterPro" id="IPR029063">
    <property type="entry name" value="SAM-dependent_MTases_sf"/>
</dbReference>
<dbReference type="Pfam" id="PF01555">
    <property type="entry name" value="N6_N4_Mtase"/>
    <property type="match status" value="1"/>
</dbReference>
<dbReference type="PIRSF" id="PIRSF015855">
    <property type="entry name" value="TypeIII_Mtase_mKpnI"/>
    <property type="match status" value="1"/>
</dbReference>
<dbReference type="PRINTS" id="PR00506">
    <property type="entry name" value="D21N6MTFRASE"/>
</dbReference>
<dbReference type="SUPFAM" id="SSF53335">
    <property type="entry name" value="S-adenosyl-L-methionine-dependent methyltransferases"/>
    <property type="match status" value="1"/>
</dbReference>
<dbReference type="PROSITE" id="PS00092">
    <property type="entry name" value="N6_MTASE"/>
    <property type="match status" value="1"/>
</dbReference>
<accession>P25238</accession>
<feature type="chain" id="PRO_0000087966" description="Type II methyltransferase M.KpnI">
    <location>
        <begin position="1"/>
        <end position="417"/>
    </location>
</feature>
<comment type="function">
    <text evidence="1">A beta subtype methylase, recognizes the double-stranded sequence 5'-GGTACC-3', methylates A-4 on both strands, and protects the DNA from cleavage by the KpnI endonuclease.</text>
</comment>
<comment type="catalytic activity">
    <reaction>
        <text>a 2'-deoxyadenosine in DNA + S-adenosyl-L-methionine = an N(6)-methyl-2'-deoxyadenosine in DNA + S-adenosyl-L-homocysteine + H(+)</text>
        <dbReference type="Rhea" id="RHEA:15197"/>
        <dbReference type="Rhea" id="RHEA-COMP:12418"/>
        <dbReference type="Rhea" id="RHEA-COMP:12419"/>
        <dbReference type="ChEBI" id="CHEBI:15378"/>
        <dbReference type="ChEBI" id="CHEBI:57856"/>
        <dbReference type="ChEBI" id="CHEBI:59789"/>
        <dbReference type="ChEBI" id="CHEBI:90615"/>
        <dbReference type="ChEBI" id="CHEBI:90616"/>
        <dbReference type="EC" id="2.1.1.72"/>
    </reaction>
</comment>
<comment type="similarity">
    <text evidence="3">Belongs to the N(4)/N(6)-methyltransferase family.</text>
</comment>
<reference key="1">
    <citation type="journal article" date="1991" name="Nucleic Acids Res.">
        <title>Genetic organization of the KpnI restriction-modification system.</title>
        <authorList>
            <person name="Chatterjee D.K."/>
            <person name="Hammond A.W."/>
            <person name="Blakesley R.W."/>
            <person name="Adams S.M."/>
            <person name="Gerard G.F."/>
        </authorList>
    </citation>
    <scope>NUCLEOTIDE SEQUENCE [GENOMIC DNA]</scope>
    <source>
        <strain>OK8</strain>
    </source>
</reference>
<reference key="2">
    <citation type="journal article" date="2003" name="Nucleic Acids Res.">
        <title>A nomenclature for restriction enzymes, DNA methyltransferases, homing endonucleases and their genes.</title>
        <authorList>
            <person name="Roberts R.J."/>
            <person name="Belfort M."/>
            <person name="Bestor T."/>
            <person name="Bhagwat A.S."/>
            <person name="Bickle T.A."/>
            <person name="Bitinaite J."/>
            <person name="Blumenthal R.M."/>
            <person name="Degtyarev S.K."/>
            <person name="Dryden D.T."/>
            <person name="Dybvig K."/>
            <person name="Firman K."/>
            <person name="Gromova E.S."/>
            <person name="Gumport R.I."/>
            <person name="Halford S.E."/>
            <person name="Hattman S."/>
            <person name="Heitman J."/>
            <person name="Hornby D.P."/>
            <person name="Janulaitis A."/>
            <person name="Jeltsch A."/>
            <person name="Josephsen J."/>
            <person name="Kiss A."/>
            <person name="Klaenhammer T.R."/>
            <person name="Kobayashi I."/>
            <person name="Kong H."/>
            <person name="Krueger D.H."/>
            <person name="Lacks S."/>
            <person name="Marinus M.G."/>
            <person name="Miyahara M."/>
            <person name="Morgan R.D."/>
            <person name="Murray N.E."/>
            <person name="Nagaraja V."/>
            <person name="Piekarowicz A."/>
            <person name="Pingoud A."/>
            <person name="Raleigh E."/>
            <person name="Rao D.N."/>
            <person name="Reich N."/>
            <person name="Repin V.E."/>
            <person name="Selker E.U."/>
            <person name="Shaw P.C."/>
            <person name="Stein D.C."/>
            <person name="Stoddard B.L."/>
            <person name="Szybalski W."/>
            <person name="Trautner T.A."/>
            <person name="Van Etten J.L."/>
            <person name="Vitor J.M."/>
            <person name="Wilson G.G."/>
            <person name="Xu S.Y."/>
        </authorList>
    </citation>
    <scope>NOMENCLATURE</scope>
    <scope>SUBTYPE</scope>
</reference>
<keyword id="KW-0489">Methyltransferase</keyword>
<keyword id="KW-0680">Restriction system</keyword>
<keyword id="KW-0949">S-adenosyl-L-methionine</keyword>
<keyword id="KW-0808">Transferase</keyword>
<evidence type="ECO:0000303" key="1">
    <source>
    </source>
</evidence>
<evidence type="ECO:0000303" key="2">
    <source>
    </source>
</evidence>
<evidence type="ECO:0000305" key="3"/>